<feature type="chain" id="PRO_0000428782" description="Vitamin B12-dependent ribonucleoside-diphosphate reductase, 1st part" evidence="2">
    <location>
        <begin position="1"/>
        <end position="301"/>
    </location>
</feature>
<feature type="chain" id="PRO_0000428783" description="Endonuclease PI-PfuI" evidence="2">
    <location>
        <begin position="302"/>
        <end position="755"/>
    </location>
</feature>
<feature type="chain" id="PRO_0000428784" description="Vitamin B12-dependent ribonucleoside-diphosphate reductase, 2nd part" evidence="2">
    <location>
        <begin position="756"/>
        <end position="914"/>
    </location>
</feature>
<feature type="chain" id="PRO_0000428785" description="Pfu rnr-2 intein" evidence="2">
    <location>
        <begin position="915"/>
        <end position="1296"/>
    </location>
</feature>
<feature type="chain" id="PRO_0000428786" description="Vitamin B12-dependent ribonucleoside-diphosphate reductase, 3rd part" evidence="2">
    <location>
        <begin position="1297"/>
        <end position="1740"/>
    </location>
</feature>
<feature type="domain" description="ATP-cone" evidence="4">
    <location>
        <begin position="4"/>
        <end position="96"/>
    </location>
</feature>
<feature type="domain" description="DOD-type homing endonuclease 1" evidence="3">
    <location>
        <begin position="443"/>
        <end position="582"/>
    </location>
</feature>
<feature type="domain" description="DOD-type homing endonuclease 2" evidence="3">
    <location>
        <begin position="1063"/>
        <end position="1194"/>
    </location>
</feature>
<feature type="active site" description="Proton acceptor" evidence="1">
    <location>
        <position position="913"/>
    </location>
</feature>
<feature type="active site" description="Cysteine radical intermediate" evidence="1">
    <location>
        <position position="1297"/>
    </location>
</feature>
<feature type="active site" description="Proton acceptor" evidence="1">
    <location>
        <position position="1299"/>
    </location>
</feature>
<feature type="binding site" evidence="1">
    <location>
        <position position="257"/>
    </location>
    <ligand>
        <name>substrate</name>
    </ligand>
</feature>
<feature type="binding site" evidence="1">
    <location>
        <begin position="272"/>
        <end position="273"/>
    </location>
    <ligand>
        <name>substrate</name>
    </ligand>
</feature>
<feature type="binding site" evidence="1">
    <location>
        <position position="301"/>
    </location>
    <ligand>
        <name>substrate</name>
    </ligand>
</feature>
<feature type="binding site" evidence="1">
    <location>
        <begin position="913"/>
        <end position="914"/>
    </location>
    <ligand>
        <name>substrate</name>
    </ligand>
</feature>
<feature type="binding site" evidence="1">
    <location>
        <begin position="1297"/>
        <end position="1299"/>
    </location>
    <ligand>
        <name>substrate</name>
    </ligand>
</feature>
<feature type="binding site" evidence="1">
    <location>
        <begin position="1471"/>
        <end position="1475"/>
    </location>
    <ligand>
        <name>substrate</name>
    </ligand>
</feature>
<feature type="disulfide bond" description="Redox-active" evidence="1">
    <location>
        <begin position="273"/>
        <end position="1308"/>
    </location>
</feature>
<feature type="strand" evidence="7">
    <location>
        <begin position="308"/>
        <end position="315"/>
    </location>
</feature>
<feature type="strand" evidence="7">
    <location>
        <begin position="317"/>
        <end position="321"/>
    </location>
</feature>
<feature type="helix" evidence="7">
    <location>
        <begin position="322"/>
        <end position="329"/>
    </location>
</feature>
<feature type="helix" evidence="7">
    <location>
        <begin position="330"/>
        <end position="332"/>
    </location>
</feature>
<feature type="strand" evidence="7">
    <location>
        <begin position="335"/>
        <end position="337"/>
    </location>
</feature>
<feature type="turn" evidence="7">
    <location>
        <begin position="338"/>
        <end position="341"/>
    </location>
</feature>
<feature type="strand" evidence="7">
    <location>
        <begin position="342"/>
        <end position="346"/>
    </location>
</feature>
<feature type="strand" evidence="7">
    <location>
        <begin position="353"/>
        <end position="358"/>
    </location>
</feature>
<feature type="turn" evidence="7">
    <location>
        <begin position="359"/>
        <end position="362"/>
    </location>
</feature>
<feature type="strand" evidence="7">
    <location>
        <begin position="363"/>
        <end position="377"/>
    </location>
</feature>
<feature type="strand" evidence="7">
    <location>
        <begin position="383"/>
        <end position="388"/>
    </location>
</feature>
<feature type="strand" evidence="7">
    <location>
        <begin position="393"/>
        <end position="396"/>
    </location>
</feature>
<feature type="strand" evidence="7">
    <location>
        <begin position="401"/>
        <end position="405"/>
    </location>
</feature>
<feature type="strand" evidence="7">
    <location>
        <begin position="411"/>
        <end position="415"/>
    </location>
</feature>
<feature type="turn" evidence="7">
    <location>
        <begin position="416"/>
        <end position="418"/>
    </location>
</feature>
<feature type="helix" evidence="7">
    <location>
        <begin position="439"/>
        <end position="450"/>
    </location>
</feature>
<feature type="strand" evidence="7">
    <location>
        <begin position="451"/>
        <end position="457"/>
    </location>
</feature>
<feature type="strand" evidence="7">
    <location>
        <begin position="466"/>
        <end position="475"/>
    </location>
</feature>
<feature type="helix" evidence="7">
    <location>
        <begin position="477"/>
        <end position="491"/>
    </location>
</feature>
<feature type="strand" evidence="7">
    <location>
        <begin position="498"/>
        <end position="502"/>
    </location>
</feature>
<feature type="strand" evidence="7">
    <location>
        <begin position="504"/>
        <end position="508"/>
    </location>
</feature>
<feature type="helix" evidence="7">
    <location>
        <begin position="511"/>
        <end position="521"/>
    </location>
</feature>
<feature type="helix" evidence="7">
    <location>
        <begin position="524"/>
        <end position="526"/>
    </location>
</feature>
<feature type="helix" evidence="7">
    <location>
        <begin position="530"/>
        <end position="533"/>
    </location>
</feature>
<feature type="helix" evidence="7">
    <location>
        <begin position="537"/>
        <end position="551"/>
    </location>
</feature>
<feature type="strand" evidence="7">
    <location>
        <begin position="553"/>
        <end position="555"/>
    </location>
</feature>
<feature type="turn" evidence="7">
    <location>
        <begin position="556"/>
        <end position="558"/>
    </location>
</feature>
<feature type="strand" evidence="7">
    <location>
        <begin position="559"/>
        <end position="565"/>
    </location>
</feature>
<feature type="helix" evidence="7">
    <location>
        <begin position="567"/>
        <end position="578"/>
    </location>
</feature>
<feature type="turn" evidence="7">
    <location>
        <begin position="579"/>
        <end position="581"/>
    </location>
</feature>
<feature type="strand" evidence="7">
    <location>
        <begin position="585"/>
        <end position="590"/>
    </location>
</feature>
<feature type="strand" evidence="7">
    <location>
        <begin position="592"/>
        <end position="601"/>
    </location>
</feature>
<feature type="helix" evidence="7">
    <location>
        <begin position="604"/>
        <end position="613"/>
    </location>
</feature>
<feature type="helix" evidence="7">
    <location>
        <begin position="615"/>
        <end position="617"/>
    </location>
</feature>
<feature type="helix" evidence="7">
    <location>
        <begin position="621"/>
        <end position="632"/>
    </location>
</feature>
<feature type="helix" evidence="7">
    <location>
        <begin position="645"/>
        <end position="653"/>
    </location>
</feature>
<feature type="turn" evidence="7">
    <location>
        <begin position="654"/>
        <end position="656"/>
    </location>
</feature>
<feature type="strand" evidence="7">
    <location>
        <begin position="658"/>
        <end position="662"/>
    </location>
</feature>
<feature type="strand" evidence="7">
    <location>
        <begin position="665"/>
        <end position="670"/>
    </location>
</feature>
<feature type="strand" evidence="7">
    <location>
        <begin position="673"/>
        <end position="676"/>
    </location>
</feature>
<feature type="helix" evidence="7">
    <location>
        <begin position="680"/>
        <end position="683"/>
    </location>
</feature>
<feature type="helix" evidence="7">
    <location>
        <begin position="688"/>
        <end position="702"/>
    </location>
</feature>
<feature type="helix" evidence="7">
    <location>
        <begin position="705"/>
        <end position="716"/>
    </location>
</feature>
<feature type="strand" evidence="7">
    <location>
        <begin position="718"/>
        <end position="726"/>
    </location>
</feature>
<feature type="strand" evidence="7">
    <location>
        <begin position="730"/>
        <end position="737"/>
    </location>
</feature>
<feature type="turn" evidence="7">
    <location>
        <begin position="738"/>
        <end position="740"/>
    </location>
</feature>
<feature type="strand" evidence="7">
    <location>
        <begin position="742"/>
        <end position="749"/>
    </location>
</feature>
<feature type="strand" evidence="7">
    <location>
        <begin position="751"/>
        <end position="754"/>
    </location>
</feature>
<name>NDRZ_PYRFU</name>
<protein>
    <recommendedName>
        <fullName>Vitamin B12-dependent ribonucleoside-diphosphate reductase</fullName>
        <shortName>B12-dependent RNR</shortName>
        <ecNumber>1.17.4.1</ecNumber>
    </recommendedName>
    <alternativeName>
        <fullName>Ribonucleotide reductase</fullName>
    </alternativeName>
    <component>
        <recommendedName>
            <fullName>Endonuclease PI-PfuI</fullName>
            <ecNumber>3.1.-.-</ecNumber>
        </recommendedName>
        <alternativeName>
            <fullName>Pfu rnr-1 intein</fullName>
        </alternativeName>
    </component>
    <component>
        <recommendedName>
            <fullName>Pfu rnr-2 intein</fullName>
            <ecNumber>3.1.-.-</ecNumber>
        </recommendedName>
    </component>
</protein>
<accession>E7FHX6</accession>
<accession>P95484</accession>
<accession>Q7LX09</accession>
<comment type="function">
    <text evidence="5">Provides the precursors necessary for DNA synthesis. Catalyzes the biosynthesis of deoxyribonucleotides from the corresponding ribonucleotides.</text>
</comment>
<comment type="catalytic activity">
    <reaction evidence="5">
        <text>a 2'-deoxyribonucleoside 5'-diphosphate + [thioredoxin]-disulfide + H2O = a ribonucleoside 5'-diphosphate + [thioredoxin]-dithiol</text>
        <dbReference type="Rhea" id="RHEA:23252"/>
        <dbReference type="Rhea" id="RHEA-COMP:10698"/>
        <dbReference type="Rhea" id="RHEA-COMP:10700"/>
        <dbReference type="ChEBI" id="CHEBI:15377"/>
        <dbReference type="ChEBI" id="CHEBI:29950"/>
        <dbReference type="ChEBI" id="CHEBI:50058"/>
        <dbReference type="ChEBI" id="CHEBI:57930"/>
        <dbReference type="ChEBI" id="CHEBI:73316"/>
        <dbReference type="EC" id="1.17.4.1"/>
    </reaction>
</comment>
<comment type="cofactor">
    <cofactor evidence="5">
        <name>adenosylcob(III)alamin</name>
        <dbReference type="ChEBI" id="CHEBI:18408"/>
    </cofactor>
    <text evidence="5">5'-deoxyadenosylcobalamine (coenzyme B12).</text>
</comment>
<comment type="biophysicochemical properties">
    <kinetics>
        <KM evidence="5">70 uM for CDP (at 80 degrees Celsius)</KM>
    </kinetics>
</comment>
<comment type="PTM">
    <text evidence="6">This protein undergoes a protein self splicing that involves a post-translational excision of the intervening region (intein) followed by peptide ligation.</text>
</comment>
<comment type="similarity">
    <text evidence="6">Belongs to the ribonucleoside diphosphate reductase class-2 family.</text>
</comment>
<sequence length="1740" mass="200932">MAVEKVMKRDGRIVPFDESRIRWAVQRAMWEVGIRDEKKLDEVVKSIVQRINELYDGKIPHIENIQDIVELELMRAGLFEVAKAYILYRKKKAEIREEKKRILNKKELDEIDKRFSINALRVLASRYLKKDENGNIVESPRELFERVAILAVIPDLLYDERVFDKNGNYSQDLKRVEYYLEHFEEFDRKYSIGKYKLNKYHFERMVNLYKELAEQGKMKVSIDEFLAMLEKGEFNEYEKEINEYFRLMTNQIFMPNTPALINSGRPLGMLSACFVVPIEDDMESIMKAAHDVAMIQKMGGGCIDGKAKIIFENEGEEHLTTMEEMYERYKHLGEFYDEEYNRWGIDVSNVPIYVKSFDPESKRVVKGKVNVIWKYELGKDVTKYEIITNKGTKILTSPWHPFFVLTPDFKIVEKRADELKEGDILIGGMPDGEDYKFIFDYWLAGFIAGDGCFDKYHSHVKGHEYIYDRLRIYDYRIETFEIINDYLEKTFGRKYSIQKDRNIYYIDIKARNITSHYLKLLEGIDNGIPPQILKEGKNAVLSFIAGLFDAEGHVSNKPGIELGMVNKRLIEDVTHYLNALGIKARIREKLRKDGIDYVLHVEEYSSLLRFYELIGKNLQNEEKREKLEKVLSNHKGGNFGLPLNFNAFKEWASEYGVEFKTNGSQTIAIINDERISLGQWHTRNRVSKAVLVKMLRKLYEATKDEEVKRMLHLIEGLEVVRHITTTNEPRTFYDLTVENYQNYLAGENGMIFVHNTGLNFSKLRPEGDIVGTTTGAASGPVSFMHLIDAVSDVIKQGGVRRGANMGILEIWHPDIEKFIHAKEKNIGTNVLSNFNISVGIWEDFWEALKEGKKYPLINPRTGEVVKEVDPKTLFEELAYMAWAKADPGVIFFDVINRRNVLKKAKGGPIRATNPCVVGDTRILTPEGYLKAEEIFSLAKERGKKEAVAVEGIAEEGEPYAYSVEILLPGEEKVEYETVHGKVLAVADPVAVPAYVWKVGRKKVARVKTKEGYEITATLDHKLMTPEGWKEVGKLKEGDKILLPRFEVEEEFGSESIGEDLAFVLGWFIGDGYLNVNDKRAWFYFNAEKEEEIAVRIRDILVKHFGIKAELHRYGNQIKLGVRGEAYRWLENIVKNNEKRIPEIVYRLKPREIAAFLRGLFSADGYVDKDMAIRLTSKSRELLREVQDLLLLFGILSKIYEKPYESEFHYTTKNGEERIYRSKGYYELVITNYSRKLFAEKIGLEGYKMEKLSLKKTKVDQPIVTVESVEVLGEEIVYDFTVPNYHMYISNGFMSHNCGEEPLYEYESCNLASINLAKFVKYDENGKPYFDWDEYAYVIQKVAKYLDNSIDVNKFPLPEIDYNTKLTRRIGVGMMGLADALFKLGIPYNSEEGFKFMRKVTEYLTFYAYKYSVEAAKKRGTFPLYDKTEYPEGKLPVEGFYHPEIWNLPWDKLVEEIKKYGLRNAMVTTCPPTGSVSMIADTSSGIEPVYALVYKKSVTVGEFYYVDPVFEEELKKRGLYSEELLKKISDNYGSVQGLEEIPEDMQRVFVTALDIHWLDHIIAQASIQMWLTDSASKTINMINEATVEDVKAAYLIARFLGCKGVTVYRDGSLSVQVYSVEGEKKKRRFKPKPSEYAKKILLEIVEKEPWIKNFINVDEILNGKKEQLLFSLRPANESKLKVPGREEEVRPGNIPEEKIRELLGVVYCPVCYEKEGKLVELKMESGCATCPVCGWSKCVIS</sequence>
<gene>
    <name type="primary">rnr</name>
    <name type="ordered locus">PF0440</name>
</gene>
<keyword id="KW-0002">3D-structure</keyword>
<keyword id="KW-0067">ATP-binding</keyword>
<keyword id="KW-0068">Autocatalytic cleavage</keyword>
<keyword id="KW-0846">Cobalamin</keyword>
<keyword id="KW-0170">Cobalt</keyword>
<keyword id="KW-0215">Deoxyribonucleotide synthesis</keyword>
<keyword id="KW-0903">Direct protein sequencing</keyword>
<keyword id="KW-1015">Disulfide bond</keyword>
<keyword id="KW-0255">Endonuclease</keyword>
<keyword id="KW-0378">Hydrolase</keyword>
<keyword id="KW-0540">Nuclease</keyword>
<keyword id="KW-0547">Nucleotide-binding</keyword>
<keyword id="KW-0560">Oxidoreductase</keyword>
<keyword id="KW-0651">Protein splicing</keyword>
<keyword id="KW-1185">Reference proteome</keyword>
<keyword id="KW-0677">Repeat</keyword>
<evidence type="ECO:0000250" key="1"/>
<evidence type="ECO:0000255" key="2"/>
<evidence type="ECO:0000255" key="3">
    <source>
        <dbReference type="PROSITE-ProRule" id="PRU00273"/>
    </source>
</evidence>
<evidence type="ECO:0000255" key="4">
    <source>
        <dbReference type="PROSITE-ProRule" id="PRU00492"/>
    </source>
</evidence>
<evidence type="ECO:0000269" key="5">
    <source>
    </source>
</evidence>
<evidence type="ECO:0000305" key="6"/>
<evidence type="ECO:0007829" key="7">
    <source>
        <dbReference type="PDB" id="1DQ3"/>
    </source>
</evidence>
<dbReference type="EC" id="1.17.4.1"/>
<dbReference type="EC" id="3.1.-.-"/>
<dbReference type="EMBL" id="U78098">
    <property type="protein sequence ID" value="AAB36947.1"/>
    <property type="molecule type" value="Genomic_DNA"/>
</dbReference>
<dbReference type="EMBL" id="AE009950">
    <property type="protein sequence ID" value="AAL80564.1"/>
    <property type="molecule type" value="Genomic_DNA"/>
</dbReference>
<dbReference type="PIR" id="T43215">
    <property type="entry name" value="T43215"/>
</dbReference>
<dbReference type="RefSeq" id="WP_011011558.1">
    <property type="nucleotide sequence ID" value="NZ_CP023154.1"/>
</dbReference>
<dbReference type="PDB" id="1DQ3">
    <property type="method" value="X-ray"/>
    <property type="resolution" value="2.10 A"/>
    <property type="chains" value="A=302-755"/>
</dbReference>
<dbReference type="PDBsum" id="1DQ3"/>
<dbReference type="SMR" id="E7FHX6"/>
<dbReference type="IntAct" id="E7FHX6">
    <property type="interactions" value="1"/>
</dbReference>
<dbReference type="STRING" id="186497.PF0440"/>
<dbReference type="PaxDb" id="186497-PF0440"/>
<dbReference type="KEGG" id="pfu:PF0440"/>
<dbReference type="PATRIC" id="fig|186497.12.peg.464"/>
<dbReference type="eggNOG" id="arCOG03151">
    <property type="taxonomic scope" value="Archaea"/>
</dbReference>
<dbReference type="eggNOG" id="arCOG03154">
    <property type="taxonomic scope" value="Archaea"/>
</dbReference>
<dbReference type="eggNOG" id="arCOG04276">
    <property type="taxonomic scope" value="Archaea"/>
</dbReference>
<dbReference type="HOGENOM" id="CLU_000404_2_3_2"/>
<dbReference type="OrthoDB" id="6188at2157"/>
<dbReference type="PhylomeDB" id="E7FHX6"/>
<dbReference type="BioCyc" id="MetaCyc:MONOMER-15780"/>
<dbReference type="BRENDA" id="1.17.4.1">
    <property type="organism ID" value="5243"/>
</dbReference>
<dbReference type="SABIO-RK" id="E7FHX6"/>
<dbReference type="EvolutionaryTrace" id="E7FHX6"/>
<dbReference type="Proteomes" id="UP000001013">
    <property type="component" value="Chromosome"/>
</dbReference>
<dbReference type="GO" id="GO:0005524">
    <property type="term" value="F:ATP binding"/>
    <property type="evidence" value="ECO:0007669"/>
    <property type="project" value="UniProtKB-KW"/>
</dbReference>
<dbReference type="GO" id="GO:0031419">
    <property type="term" value="F:cobalamin binding"/>
    <property type="evidence" value="ECO:0007669"/>
    <property type="project" value="UniProtKB-KW"/>
</dbReference>
<dbReference type="GO" id="GO:0004519">
    <property type="term" value="F:endonuclease activity"/>
    <property type="evidence" value="ECO:0007669"/>
    <property type="project" value="UniProtKB-KW"/>
</dbReference>
<dbReference type="GO" id="GO:0004748">
    <property type="term" value="F:ribonucleoside-diphosphate reductase activity, thioredoxin disulfide as acceptor"/>
    <property type="evidence" value="ECO:0007669"/>
    <property type="project" value="UniProtKB-EC"/>
</dbReference>
<dbReference type="GO" id="GO:0009263">
    <property type="term" value="P:deoxyribonucleotide biosynthetic process"/>
    <property type="evidence" value="ECO:0007669"/>
    <property type="project" value="UniProtKB-KW"/>
</dbReference>
<dbReference type="GO" id="GO:0016539">
    <property type="term" value="P:intein-mediated protein splicing"/>
    <property type="evidence" value="ECO:0007669"/>
    <property type="project" value="InterPro"/>
</dbReference>
<dbReference type="CDD" id="cd00081">
    <property type="entry name" value="Hint"/>
    <property type="match status" value="3"/>
</dbReference>
<dbReference type="FunFam" id="3.10.28.10:FF:000019">
    <property type="entry name" value="Vitamin B12-dependent ribonucleotide reductase"/>
    <property type="match status" value="1"/>
</dbReference>
<dbReference type="FunFam" id="3.20.70.20:FF:000028">
    <property type="entry name" value="Vitamin B12-dependent ribonucleotide reductase"/>
    <property type="match status" value="1"/>
</dbReference>
<dbReference type="Gene3D" id="3.20.70.20">
    <property type="match status" value="3"/>
</dbReference>
<dbReference type="Gene3D" id="3.30.160.90">
    <property type="match status" value="1"/>
</dbReference>
<dbReference type="Gene3D" id="2.170.16.10">
    <property type="entry name" value="Hedgehog/Intein (Hint) domain"/>
    <property type="match status" value="2"/>
</dbReference>
<dbReference type="Gene3D" id="3.10.28.10">
    <property type="entry name" value="Homing endonucleases"/>
    <property type="match status" value="3"/>
</dbReference>
<dbReference type="InterPro" id="IPR005144">
    <property type="entry name" value="ATP-cone_dom"/>
</dbReference>
<dbReference type="InterPro" id="IPR003586">
    <property type="entry name" value="Hint_dom_C"/>
</dbReference>
<dbReference type="InterPro" id="IPR003587">
    <property type="entry name" value="Hint_dom_N"/>
</dbReference>
<dbReference type="InterPro" id="IPR036844">
    <property type="entry name" value="Hint_dom_sf"/>
</dbReference>
<dbReference type="InterPro" id="IPR027434">
    <property type="entry name" value="Homing_endonucl"/>
</dbReference>
<dbReference type="InterPro" id="IPR006142">
    <property type="entry name" value="INTEIN"/>
</dbReference>
<dbReference type="InterPro" id="IPR030934">
    <property type="entry name" value="Intein_C"/>
</dbReference>
<dbReference type="InterPro" id="IPR004042">
    <property type="entry name" value="Intein_endonuc_central"/>
</dbReference>
<dbReference type="InterPro" id="IPR006141">
    <property type="entry name" value="Intein_N"/>
</dbReference>
<dbReference type="InterPro" id="IPR004860">
    <property type="entry name" value="LAGLIDADG_dom"/>
</dbReference>
<dbReference type="InterPro" id="IPR015147">
    <property type="entry name" value="PI-PfuI_intein_endonucl_subdom"/>
</dbReference>
<dbReference type="InterPro" id="IPR050862">
    <property type="entry name" value="RdRp_reductase_class-2"/>
</dbReference>
<dbReference type="InterPro" id="IPR000788">
    <property type="entry name" value="RNR_lg_C"/>
</dbReference>
<dbReference type="InterPro" id="IPR013509">
    <property type="entry name" value="RNR_lsu_N"/>
</dbReference>
<dbReference type="InterPro" id="IPR013344">
    <property type="entry name" value="RNR_NrdJ/NrdZ"/>
</dbReference>
<dbReference type="InterPro" id="IPR008926">
    <property type="entry name" value="RNR_R1-su_N"/>
</dbReference>
<dbReference type="InterPro" id="IPR015146">
    <property type="entry name" value="RNR_stirrup"/>
</dbReference>
<dbReference type="NCBIfam" id="TIGR01443">
    <property type="entry name" value="intein_Cterm"/>
    <property type="match status" value="2"/>
</dbReference>
<dbReference type="NCBIfam" id="TIGR01445">
    <property type="entry name" value="intein_Nterm"/>
    <property type="match status" value="2"/>
</dbReference>
<dbReference type="NCBIfam" id="TIGR02504">
    <property type="entry name" value="NrdJ_Z"/>
    <property type="match status" value="1"/>
</dbReference>
<dbReference type="NCBIfam" id="NF006207">
    <property type="entry name" value="PRK08332.1"/>
    <property type="match status" value="1"/>
</dbReference>
<dbReference type="PANTHER" id="PTHR43371:SF1">
    <property type="entry name" value="RIBONUCLEOSIDE-DIPHOSPHATE REDUCTASE"/>
    <property type="match status" value="1"/>
</dbReference>
<dbReference type="PANTHER" id="PTHR43371">
    <property type="entry name" value="VITAMIN B12-DEPENDENT RIBONUCLEOTIDE REDUCTASE"/>
    <property type="match status" value="1"/>
</dbReference>
<dbReference type="Pfam" id="PF03477">
    <property type="entry name" value="ATP-cone"/>
    <property type="match status" value="1"/>
</dbReference>
<dbReference type="Pfam" id="PF09062">
    <property type="entry name" value="Endonuc_subdom"/>
    <property type="match status" value="1"/>
</dbReference>
<dbReference type="Pfam" id="PF14890">
    <property type="entry name" value="Intein_splicing"/>
    <property type="match status" value="2"/>
</dbReference>
<dbReference type="Pfam" id="PF14528">
    <property type="entry name" value="LAGLIDADG_3"/>
    <property type="match status" value="2"/>
</dbReference>
<dbReference type="Pfam" id="PF02867">
    <property type="entry name" value="Ribonuc_red_lgC"/>
    <property type="match status" value="1"/>
</dbReference>
<dbReference type="Pfam" id="PF00317">
    <property type="entry name" value="Ribonuc_red_lgN"/>
    <property type="match status" value="1"/>
</dbReference>
<dbReference type="Pfam" id="PF09061">
    <property type="entry name" value="Stirrup"/>
    <property type="match status" value="1"/>
</dbReference>
<dbReference type="PRINTS" id="PR00379">
    <property type="entry name" value="INTEIN"/>
</dbReference>
<dbReference type="SMART" id="SM00305">
    <property type="entry name" value="HintC"/>
    <property type="match status" value="2"/>
</dbReference>
<dbReference type="SMART" id="SM00306">
    <property type="entry name" value="HintN"/>
    <property type="match status" value="2"/>
</dbReference>
<dbReference type="SUPFAM" id="SSF51294">
    <property type="entry name" value="Hedgehog/intein (Hint) domain"/>
    <property type="match status" value="2"/>
</dbReference>
<dbReference type="SUPFAM" id="SSF55608">
    <property type="entry name" value="Homing endonucleases"/>
    <property type="match status" value="4"/>
</dbReference>
<dbReference type="SUPFAM" id="SSF51998">
    <property type="entry name" value="PFL-like glycyl radical enzymes"/>
    <property type="match status" value="2"/>
</dbReference>
<dbReference type="SUPFAM" id="SSF48168">
    <property type="entry name" value="R1 subunit of ribonucleotide reductase, N-terminal domain"/>
    <property type="match status" value="1"/>
</dbReference>
<dbReference type="SUPFAM" id="SSF54786">
    <property type="entry name" value="YcfA/nrd intein domain"/>
    <property type="match status" value="1"/>
</dbReference>
<dbReference type="PROSITE" id="PS51161">
    <property type="entry name" value="ATP_CONE"/>
    <property type="match status" value="1"/>
</dbReference>
<dbReference type="PROSITE" id="PS50818">
    <property type="entry name" value="INTEIN_C_TER"/>
    <property type="match status" value="2"/>
</dbReference>
<dbReference type="PROSITE" id="PS50819">
    <property type="entry name" value="INTEIN_ENDONUCLEASE"/>
    <property type="match status" value="2"/>
</dbReference>
<dbReference type="PROSITE" id="PS50817">
    <property type="entry name" value="INTEIN_N_TER"/>
    <property type="match status" value="2"/>
</dbReference>
<proteinExistence type="evidence at protein level"/>
<organism>
    <name type="scientific">Pyrococcus furiosus (strain ATCC 43587 / DSM 3638 / JCM 8422 / Vc1)</name>
    <dbReference type="NCBI Taxonomy" id="186497"/>
    <lineage>
        <taxon>Archaea</taxon>
        <taxon>Methanobacteriati</taxon>
        <taxon>Methanobacteriota</taxon>
        <taxon>Thermococci</taxon>
        <taxon>Thermococcales</taxon>
        <taxon>Thermococcaceae</taxon>
        <taxon>Pyrococcus</taxon>
    </lineage>
</organism>
<reference key="1">
    <citation type="journal article" date="1997" name="Proc. Natl. Acad. Sci. U.S.A.">
        <title>Ribonucleotide reductase in the archaeon Pyrococcus furiosus: a critical enzyme in the evolution of DNA genomes?</title>
        <authorList>
            <person name="Riera J."/>
            <person name="Robb F.T."/>
            <person name="Weiss R."/>
            <person name="Fontecave M."/>
        </authorList>
    </citation>
    <scope>NUCLEOTIDE SEQUENCE [GENOMIC DNA]</scope>
    <scope>PROTEIN SEQUENCE OF 1-15</scope>
    <scope>FUNCTION</scope>
    <scope>CATALYTIC ACTIVITY</scope>
    <scope>COFACTOR</scope>
    <scope>BIOPHYSICOCHEMICAL PROPERTIES</scope>
    <source>
        <strain>ATCC 43587 / DSM 3638 / JCM 8422 / Vc1</strain>
    </source>
</reference>
<reference key="2">
    <citation type="journal article" date="1999" name="Genetics">
        <title>Divergence of the hyperthermophilic archaea Pyrococcus furiosus and P. horikoshii inferred from complete genomic sequences.</title>
        <authorList>
            <person name="Maeder D.L."/>
            <person name="Weiss R.B."/>
            <person name="Dunn D.M."/>
            <person name="Cherry J.L."/>
            <person name="Gonzalez J.M."/>
            <person name="DiRuggiero J."/>
            <person name="Robb F.T."/>
        </authorList>
    </citation>
    <scope>NUCLEOTIDE SEQUENCE [LARGE SCALE GENOMIC DNA]</scope>
    <source>
        <strain>ATCC 43587 / DSM 3638 / JCM 8422 / Vc1</strain>
    </source>
</reference>
<reference key="3">
    <citation type="journal article" date="2000" name="J. Mol. Biol.">
        <title>Crystal structure of an archaeal intein-encoded homing endonuclease PI-PfuI.</title>
        <authorList>
            <person name="Ichiyanagi K."/>
            <person name="Ishino Y."/>
            <person name="Ariyoshi M."/>
            <person name="Komori K."/>
            <person name="Morikawa K."/>
        </authorList>
    </citation>
    <scope>X-RAY CRYSTALLOGRAPHY (2.10 ANGSTROMS) OF 302-755</scope>
</reference>